<dbReference type="EC" id="7.5.2.10" evidence="1"/>
<dbReference type="EMBL" id="AE008918">
    <property type="protein sequence ID" value="AAL53386.1"/>
    <property type="status" value="ALT_INIT"/>
    <property type="molecule type" value="Genomic_DNA"/>
</dbReference>
<dbReference type="PIR" id="AG3527">
    <property type="entry name" value="AG3527"/>
</dbReference>
<dbReference type="RefSeq" id="WP_004681019.1">
    <property type="nucleotide sequence ID" value="NC_003318.1"/>
</dbReference>
<dbReference type="SMR" id="Q8YDN0"/>
<dbReference type="GeneID" id="29596009"/>
<dbReference type="KEGG" id="bme:BMEII0145"/>
<dbReference type="KEGG" id="bmel:DK63_3100"/>
<dbReference type="PATRIC" id="fig|224914.52.peg.3246"/>
<dbReference type="eggNOG" id="COG1129">
    <property type="taxonomic scope" value="Bacteria"/>
</dbReference>
<dbReference type="PhylomeDB" id="Q8YDN0"/>
<dbReference type="Proteomes" id="UP000000419">
    <property type="component" value="Chromosome II"/>
</dbReference>
<dbReference type="GO" id="GO:0005886">
    <property type="term" value="C:plasma membrane"/>
    <property type="evidence" value="ECO:0007669"/>
    <property type="project" value="UniProtKB-SubCell"/>
</dbReference>
<dbReference type="GO" id="GO:0015614">
    <property type="term" value="F:ABC-type D-xylose transporter activity"/>
    <property type="evidence" value="ECO:0007669"/>
    <property type="project" value="UniProtKB-EC"/>
</dbReference>
<dbReference type="GO" id="GO:0005524">
    <property type="term" value="F:ATP binding"/>
    <property type="evidence" value="ECO:0007669"/>
    <property type="project" value="UniProtKB-KW"/>
</dbReference>
<dbReference type="GO" id="GO:0016887">
    <property type="term" value="F:ATP hydrolysis activity"/>
    <property type="evidence" value="ECO:0007669"/>
    <property type="project" value="InterPro"/>
</dbReference>
<dbReference type="CDD" id="cd03216">
    <property type="entry name" value="ABC_Carb_Monos_I"/>
    <property type="match status" value="1"/>
</dbReference>
<dbReference type="CDD" id="cd03215">
    <property type="entry name" value="ABC_Carb_Monos_II"/>
    <property type="match status" value="1"/>
</dbReference>
<dbReference type="FunFam" id="3.40.50.300:FF:000126">
    <property type="entry name" value="Galactose/methyl galactoside import ATP-binding protein MglA"/>
    <property type="match status" value="1"/>
</dbReference>
<dbReference type="FunFam" id="3.40.50.300:FF:000127">
    <property type="entry name" value="Ribose import ATP-binding protein RbsA"/>
    <property type="match status" value="1"/>
</dbReference>
<dbReference type="Gene3D" id="3.40.50.300">
    <property type="entry name" value="P-loop containing nucleotide triphosphate hydrolases"/>
    <property type="match status" value="2"/>
</dbReference>
<dbReference type="InterPro" id="IPR003593">
    <property type="entry name" value="AAA+_ATPase"/>
</dbReference>
<dbReference type="InterPro" id="IPR050107">
    <property type="entry name" value="ABC_carbohydrate_import_ATPase"/>
</dbReference>
<dbReference type="InterPro" id="IPR003439">
    <property type="entry name" value="ABC_transporter-like_ATP-bd"/>
</dbReference>
<dbReference type="InterPro" id="IPR017871">
    <property type="entry name" value="ABC_transporter-like_CS"/>
</dbReference>
<dbReference type="InterPro" id="IPR013455">
    <property type="entry name" value="ABC_transptr_XylG"/>
</dbReference>
<dbReference type="InterPro" id="IPR027417">
    <property type="entry name" value="P-loop_NTPase"/>
</dbReference>
<dbReference type="NCBIfam" id="NF010069">
    <property type="entry name" value="PRK13549.1"/>
    <property type="match status" value="1"/>
</dbReference>
<dbReference type="NCBIfam" id="TIGR02633">
    <property type="entry name" value="xylG"/>
    <property type="match status" value="1"/>
</dbReference>
<dbReference type="PANTHER" id="PTHR43790">
    <property type="entry name" value="CARBOHYDRATE TRANSPORT ATP-BINDING PROTEIN MG119-RELATED"/>
    <property type="match status" value="1"/>
</dbReference>
<dbReference type="PANTHER" id="PTHR43790:SF1">
    <property type="entry name" value="XYLOSE IMPORT ATP-BINDING PROTEIN XYLG"/>
    <property type="match status" value="1"/>
</dbReference>
<dbReference type="Pfam" id="PF00005">
    <property type="entry name" value="ABC_tran"/>
    <property type="match status" value="2"/>
</dbReference>
<dbReference type="SMART" id="SM00382">
    <property type="entry name" value="AAA"/>
    <property type="match status" value="2"/>
</dbReference>
<dbReference type="SUPFAM" id="SSF52540">
    <property type="entry name" value="P-loop containing nucleoside triphosphate hydrolases"/>
    <property type="match status" value="2"/>
</dbReference>
<dbReference type="PROSITE" id="PS00211">
    <property type="entry name" value="ABC_TRANSPORTER_1"/>
    <property type="match status" value="1"/>
</dbReference>
<dbReference type="PROSITE" id="PS50893">
    <property type="entry name" value="ABC_TRANSPORTER_2"/>
    <property type="match status" value="2"/>
</dbReference>
<dbReference type="PROSITE" id="PS51280">
    <property type="entry name" value="XYLG"/>
    <property type="match status" value="1"/>
</dbReference>
<organism>
    <name type="scientific">Brucella melitensis biotype 1 (strain ATCC 23456 / CCUG 17765 / NCTC 10094 / 16M)</name>
    <dbReference type="NCBI Taxonomy" id="224914"/>
    <lineage>
        <taxon>Bacteria</taxon>
        <taxon>Pseudomonadati</taxon>
        <taxon>Pseudomonadota</taxon>
        <taxon>Alphaproteobacteria</taxon>
        <taxon>Hyphomicrobiales</taxon>
        <taxon>Brucellaceae</taxon>
        <taxon>Brucella/Ochrobactrum group</taxon>
        <taxon>Brucella</taxon>
    </lineage>
</organism>
<accession>Q8YDN0</accession>
<comment type="function">
    <text evidence="1">Part of the ABC transporter complex XylFGH involved in xylose import. Responsible for energy coupling to the transport system.</text>
</comment>
<comment type="catalytic activity">
    <reaction evidence="1">
        <text>D-xylose(out) + ATP + H2O = D-xylose(in) + ADP + phosphate + H(+)</text>
        <dbReference type="Rhea" id="RHEA:29899"/>
        <dbReference type="ChEBI" id="CHEBI:15377"/>
        <dbReference type="ChEBI" id="CHEBI:15378"/>
        <dbReference type="ChEBI" id="CHEBI:30616"/>
        <dbReference type="ChEBI" id="CHEBI:43474"/>
        <dbReference type="ChEBI" id="CHEBI:53455"/>
        <dbReference type="ChEBI" id="CHEBI:456216"/>
        <dbReference type="EC" id="7.5.2.10"/>
    </reaction>
</comment>
<comment type="subunit">
    <text evidence="1">The complex is composed of two ATP-binding proteins (XylG), two transmembrane proteins (XylH) and a solute-binding protein (XylF).</text>
</comment>
<comment type="subcellular location">
    <subcellularLocation>
        <location evidence="1">Cell inner membrane</location>
        <topology evidence="1">Peripheral membrane protein</topology>
    </subcellularLocation>
</comment>
<comment type="similarity">
    <text evidence="1">Belongs to the ABC transporter superfamily. Xylose importer (TC 3.A.1.2.4) family.</text>
</comment>
<comment type="sequence caution" evidence="2">
    <conflict type="erroneous initiation">
        <sequence resource="EMBL-CDS" id="AAL53386"/>
    </conflict>
</comment>
<evidence type="ECO:0000255" key="1">
    <source>
        <dbReference type="HAMAP-Rule" id="MF_01722"/>
    </source>
</evidence>
<evidence type="ECO:0000305" key="2"/>
<protein>
    <recommendedName>
        <fullName evidence="1">Xylose import ATP-binding protein XylG</fullName>
        <ecNumber evidence="1">7.5.2.10</ecNumber>
    </recommendedName>
</protein>
<feature type="chain" id="PRO_0000271495" description="Xylose import ATP-binding protein XylG">
    <location>
        <begin position="1"/>
        <end position="511"/>
    </location>
</feature>
<feature type="domain" description="ABC transporter 1" evidence="1">
    <location>
        <begin position="6"/>
        <end position="244"/>
    </location>
</feature>
<feature type="domain" description="ABC transporter 2" evidence="1">
    <location>
        <begin position="261"/>
        <end position="506"/>
    </location>
</feature>
<keyword id="KW-0067">ATP-binding</keyword>
<keyword id="KW-0997">Cell inner membrane</keyword>
<keyword id="KW-1003">Cell membrane</keyword>
<keyword id="KW-0472">Membrane</keyword>
<keyword id="KW-0547">Nucleotide-binding</keyword>
<keyword id="KW-0677">Repeat</keyword>
<keyword id="KW-0762">Sugar transport</keyword>
<keyword id="KW-1278">Translocase</keyword>
<keyword id="KW-0813">Transport</keyword>
<reference key="1">
    <citation type="journal article" date="2002" name="Proc. Natl. Acad. Sci. U.S.A.">
        <title>The genome sequence of the facultative intracellular pathogen Brucella melitensis.</title>
        <authorList>
            <person name="DelVecchio V.G."/>
            <person name="Kapatral V."/>
            <person name="Redkar R.J."/>
            <person name="Patra G."/>
            <person name="Mujer C."/>
            <person name="Los T."/>
            <person name="Ivanova N."/>
            <person name="Anderson I."/>
            <person name="Bhattacharyya A."/>
            <person name="Lykidis A."/>
            <person name="Reznik G."/>
            <person name="Jablonski L."/>
            <person name="Larsen N."/>
            <person name="D'Souza M."/>
            <person name="Bernal A."/>
            <person name="Mazur M."/>
            <person name="Goltsman E."/>
            <person name="Selkov E."/>
            <person name="Elzer P.H."/>
            <person name="Hagius S."/>
            <person name="O'Callaghan D."/>
            <person name="Letesson J.-J."/>
            <person name="Haselkorn R."/>
            <person name="Kyrpides N.C."/>
            <person name="Overbeek R."/>
        </authorList>
    </citation>
    <scope>NUCLEOTIDE SEQUENCE [LARGE SCALE GENOMIC DNA]</scope>
    <source>
        <strain>ATCC 23456 / CCUG 17765 / NCTC 10094 / 16M</strain>
    </source>
</reference>
<proteinExistence type="inferred from homology"/>
<gene>
    <name evidence="1" type="primary">xylG</name>
    <name type="ordered locus">BMEII0145</name>
</gene>
<sequence length="511" mass="55948">MSEYLLEMRNIGKEFNGVKALDGIYLKVRAGECVGLCGENGAGKYTLMKVLSGVYPHGTWTGEIFWEGKELKASGIRDTEAAGIVIIHQELMMVPHLSVAENIFLGCEPTTGGFIDYDQMNARAAELLARLKINDINVALPVYHYSGGKQQLIEIAKAINKNAKLLILDEPTSALTASETRVLIDLIKDFKKQGMACVYISHKLDEVAEISDTVTVIRDGAHIATRPMSELTTPDIITMMVGREMKNLFPREPHDIGEVMFEARNISCWDVTNPDRKVVDDVSFALRRGEILGIAGLVGAGRTELVSSLFGVWPGACQGQVFLEGKEIKIRTPRDAVRQGICMVPEDRKRDGILPIMPVGHNMTISVLDRFSLRGLIDKDAELVAIQREILRLKVKTADPMLAIASLSGGNQQKAVLSKMMLPDPKVLILDEPTRGVDVGAKYEIYKLIFALARQGVSILMVSSEMPEVLGISDRVLVIGEGKLRGDFPNENLTQEKVLAAAIGKPATNAA</sequence>
<name>XYLG_BRUME</name>